<evidence type="ECO:0000255" key="1">
    <source>
        <dbReference type="PROSITE-ProRule" id="PRU01204"/>
    </source>
</evidence>
<evidence type="ECO:0000269" key="2">
    <source>
    </source>
</evidence>
<evidence type="ECO:0000303" key="3">
    <source>
    </source>
</evidence>
<evidence type="ECO:0000303" key="4">
    <source ref="1"/>
</evidence>
<evidence type="ECO:0000312" key="5">
    <source>
        <dbReference type="EMBL" id="KJT75255.1"/>
    </source>
</evidence>
<protein>
    <recommendedName>
        <fullName evidence="3">Retron Se72 cold shock-like protein</fullName>
    </recommendedName>
</protein>
<organism>
    <name type="scientific">Salmonella heidelberg (strain 579083-10)</name>
    <dbReference type="NCBI Taxonomy" id="1054962"/>
    <lineage>
        <taxon>Bacteria</taxon>
        <taxon>Pseudomonadati</taxon>
        <taxon>Pseudomonadota</taxon>
        <taxon>Gammaproteobacteria</taxon>
        <taxon>Enterobacterales</taxon>
        <taxon>Enterobacteriaceae</taxon>
        <taxon>Salmonella</taxon>
    </lineage>
</organism>
<name>CS72_SALH5</name>
<comment type="function">
    <text evidence="2">Probable cold shock-like component of antiviral defense system retron Se72, composed of a non-coding RNA (ncRNA), a reverse transcriptase (RT) and this protein. Expression of retron Se72 confers protection against bacteriophage lambda. At multiplicity of infection (MOI) of 0.02 cultures slow growth when infected with lambda but do not collapse, at MOI 2 cultures enter growth stasis.</text>
</comment>
<sequence length="67" mass="7966">MENGFVNFYDHVKGYGFIRRERGRDVFFRYDDFLFLGHDVDICKGILVRFKLEKTDKGFKAVAIQKV</sequence>
<accession>P0DV90</accession>
<proteinExistence type="evidence at protein level"/>
<gene>
    <name type="ORF">Ga0072986_12845</name>
    <name evidence="4" type="ORF">SEEH8310_20094</name>
</gene>
<reference evidence="5" key="1">
    <citation type="submission" date="2015-03" db="EMBL/GenBank/DDBJ databases">
        <title>Serovar diversity of Salmonella subsp. enterica.</title>
        <authorList>
            <person name="Timme R.E."/>
            <person name="Allard M."/>
            <person name="Luo Y."/>
            <person name="Strain E."/>
            <person name="Pettengill J."/>
            <person name="Li C."/>
            <person name="Ottesen A."/>
            <person name="Brown E."/>
        </authorList>
    </citation>
    <scope>NUCLEOTIDE SEQUENCE [LARGE SCALE GENOMIC DNA]</scope>
    <source>
        <strain>579083-10</strain>
    </source>
</reference>
<reference key="2">
    <citation type="journal article" date="2020" name="Cell">
        <title>Bacterial Retrons Function In Anti-Phage Defense.</title>
        <authorList>
            <person name="Millman A."/>
            <person name="Bernheim A."/>
            <person name="Stokar-Avihail A."/>
            <person name="Fedorenko T."/>
            <person name="Voichek M."/>
            <person name="Leavitt A."/>
            <person name="Oppenheimer-Shaanan Y."/>
            <person name="Sorek R."/>
        </authorList>
    </citation>
    <scope>FUNCTION IN ANTIVIRAL DEFENSE</scope>
    <scope>IDENTIFICATION AS A RETRON</scope>
    <source>
        <strain>579083-10</strain>
    </source>
</reference>
<keyword id="KW-0051">Antiviral defense</keyword>
<dbReference type="EMBL" id="AMMS01000284">
    <property type="protein sequence ID" value="KJT75255.1"/>
    <property type="molecule type" value="Genomic_DNA"/>
</dbReference>
<dbReference type="SMR" id="P0DV90"/>
<dbReference type="GO" id="GO:0003676">
    <property type="term" value="F:nucleic acid binding"/>
    <property type="evidence" value="ECO:0007669"/>
    <property type="project" value="InterPro"/>
</dbReference>
<dbReference type="GO" id="GO:0051607">
    <property type="term" value="P:defense response to virus"/>
    <property type="evidence" value="ECO:0007669"/>
    <property type="project" value="UniProtKB-KW"/>
</dbReference>
<dbReference type="Gene3D" id="2.40.50.140">
    <property type="entry name" value="Nucleic acid-binding proteins"/>
    <property type="match status" value="1"/>
</dbReference>
<dbReference type="InterPro" id="IPR012156">
    <property type="entry name" value="Cold_shock_CspA"/>
</dbReference>
<dbReference type="InterPro" id="IPR002059">
    <property type="entry name" value="CSP_DNA-bd"/>
</dbReference>
<dbReference type="InterPro" id="IPR012340">
    <property type="entry name" value="NA-bd_OB-fold"/>
</dbReference>
<dbReference type="NCBIfam" id="NF038236">
    <property type="entry name" value="retron_eff_Se72"/>
    <property type="match status" value="1"/>
</dbReference>
<dbReference type="Pfam" id="PF00313">
    <property type="entry name" value="CSD"/>
    <property type="match status" value="1"/>
</dbReference>
<dbReference type="PIRSF" id="PIRSF002599">
    <property type="entry name" value="Cold_shock_A"/>
    <property type="match status" value="1"/>
</dbReference>
<dbReference type="SUPFAM" id="SSF50249">
    <property type="entry name" value="Nucleic acid-binding proteins"/>
    <property type="match status" value="1"/>
</dbReference>
<dbReference type="PROSITE" id="PS51857">
    <property type="entry name" value="CSD_2"/>
    <property type="match status" value="1"/>
</dbReference>
<feature type="chain" id="PRO_0000456023" description="Retron Se72 cold shock-like protein">
    <location>
        <begin position="1"/>
        <end position="67"/>
    </location>
</feature>
<feature type="domain" description="CSD" evidence="1">
    <location>
        <begin position="1"/>
        <end position="66"/>
    </location>
</feature>